<keyword id="KW-0002">3D-structure</keyword>
<keyword id="KW-0027">Amidation</keyword>
<keyword id="KW-0044">Antibiotic</keyword>
<keyword id="KW-0929">Antimicrobial</keyword>
<keyword id="KW-0211">Defensin</keyword>
<keyword id="KW-0903">Direct protein sequencing</keyword>
<keyword id="KW-1015">Disulfide bond</keyword>
<keyword id="KW-0379">Hydroxylation</keyword>
<keyword id="KW-0391">Immunity</keyword>
<keyword id="KW-0399">Innate immunity</keyword>
<keyword id="KW-0964">Secreted</keyword>
<sequence>GFGCPNNYQCHRHCKSIPGRCGGYCGGWHRLRCTCYRCGGRREDVEDIFDIFDNEAADRF</sequence>
<reference key="1">
    <citation type="journal article" date="1999" name="J. Cell Sci.">
        <title>Mussel defensins are synthesised and processed in granulocytes then released into the plasma after bacterial challenge.</title>
        <authorList>
            <person name="Mitta G."/>
            <person name="Vandenbulcke F."/>
            <person name="Hubert F."/>
            <person name="Roch P."/>
        </authorList>
    </citation>
    <scope>NUCLEOTIDE SEQUENCE [MRNA] OF 4-60</scope>
    <scope>PROTEIN SEQUENCE OF 1-9</scope>
    <scope>TISSUE SPECIFICITY</scope>
    <scope>INDUCTION BY BACTERIA</scope>
    <scope>MASS SPECTROMETRY</scope>
    <source>
        <tissue>Hemocyte</tissue>
    </source>
</reference>
<reference key="2">
    <citation type="journal article" date="1996" name="Eur. J. Biochem.">
        <title>A member of the arthropod defensin family from edible Mediterranean mussels (Mytilus galloprovincialis).</title>
        <authorList>
            <person name="Hubert F."/>
            <person name="Noeel T."/>
            <person name="Roch P."/>
        </authorList>
    </citation>
    <scope>PROTEIN SEQUENCE OF 1-38</scope>
    <scope>FUNCTION</scope>
    <scope>HYDROXYLATION AT TRP-28</scope>
    <scope>AMIDATION AT CYS-38</scope>
    <source>
        <tissue>Hemolymph</tissue>
    </source>
</reference>
<reference key="3">
    <citation type="journal article" date="1996" name="Eur. J. Biochem.">
        <authorList>
            <person name="Hubert F."/>
            <person name="Noeel T."/>
            <person name="Roch P."/>
        </authorList>
    </citation>
    <scope>ERRATUM OF PUBMED:8925841</scope>
</reference>
<reference key="4">
    <citation type="journal article" date="2000" name="Biochemistry">
        <title>Solution structure and activity of the synthetic four-disulfide bond Mediterranean mussel defensin (MGD-1).</title>
        <authorList>
            <person name="Yang Y.S."/>
            <person name="Mitta G."/>
            <person name="Chavanieu A."/>
            <person name="Calas B."/>
            <person name="Sanchez J.F."/>
            <person name="Roch P."/>
            <person name="Aumelas A."/>
        </authorList>
    </citation>
    <scope>STRUCTURE BY NMR OF 1-38</scope>
</reference>
<organism>
    <name type="scientific">Mytilus galloprovincialis</name>
    <name type="common">Mediterranean mussel</name>
    <dbReference type="NCBI Taxonomy" id="29158"/>
    <lineage>
        <taxon>Eukaryota</taxon>
        <taxon>Metazoa</taxon>
        <taxon>Spiralia</taxon>
        <taxon>Lophotrochozoa</taxon>
        <taxon>Mollusca</taxon>
        <taxon>Bivalvia</taxon>
        <taxon>Autobranchia</taxon>
        <taxon>Pteriomorphia</taxon>
        <taxon>Mytilida</taxon>
        <taxon>Mytiloidea</taxon>
        <taxon>Mytilidae</taxon>
        <taxon>Mytilinae</taxon>
        <taxon>Mytilus</taxon>
    </lineage>
</organism>
<proteinExistence type="evidence at protein level"/>
<comment type="function">
    <text evidence="4">Active against both Gram-positive and Gram-negative bacteria but is not cytotoxic towards human erythrocytes or protozoa (PubMed:8925841).</text>
</comment>
<comment type="subcellular location">
    <subcellularLocation>
        <location evidence="7">Secreted</location>
    </subcellularLocation>
</comment>
<comment type="tissue specificity">
    <text evidence="2">Abundantly expressed in hemocytes.</text>
</comment>
<comment type="induction">
    <text evidence="2">Its expression is increased by bacterial challenge.</text>
</comment>
<comment type="PTM">
    <text evidence="3">The hydroxylation of the Trp-28 is not important for the antibacterial activity.</text>
</comment>
<comment type="mass spectrometry"/>
<comment type="miscellaneous">
    <text evidence="3">The Cys-4-Pro-5 bond is in cis conformation.</text>
</comment>
<comment type="similarity">
    <text evidence="1">Belongs to the invertebrate defensin family. Type 2 subfamily.</text>
</comment>
<comment type="online information" name="The antimicrobial peptide database">
    <link uri="https://wangapd3.com/database/query_output.php?ID=00438"/>
</comment>
<protein>
    <recommendedName>
        <fullName evidence="5">Defensin MGD-1</fullName>
    </recommendedName>
    <alternativeName>
        <fullName evidence="7">Defensin-like peptide</fullName>
        <shortName evidence="7">DLP</shortName>
    </alternativeName>
    <alternativeName>
        <fullName evidence="6">Mytilus galloprovincialis defensin 1</fullName>
        <shortName evidence="6">MGD1</shortName>
    </alternativeName>
</protein>
<evidence type="ECO:0000255" key="1">
    <source>
        <dbReference type="PROSITE-ProRule" id="PRU00710"/>
    </source>
</evidence>
<evidence type="ECO:0000269" key="2">
    <source>
    </source>
</evidence>
<evidence type="ECO:0000269" key="3">
    <source>
    </source>
</evidence>
<evidence type="ECO:0000269" key="4">
    <source>
    </source>
</evidence>
<evidence type="ECO:0000303" key="5">
    <source>
    </source>
</evidence>
<evidence type="ECO:0000303" key="6">
    <source>
    </source>
</evidence>
<evidence type="ECO:0000305" key="7"/>
<evidence type="ECO:0007744" key="8">
    <source>
        <dbReference type="PDB" id="1FJN"/>
    </source>
</evidence>
<evidence type="ECO:0007829" key="9">
    <source>
        <dbReference type="PDB" id="1FJN"/>
    </source>
</evidence>
<gene>
    <name type="primary">FH3</name>
</gene>
<name>DEFI_MYTGA</name>
<feature type="peptide" id="PRO_0000006762" description="Defensin MGD-1" evidence="4">
    <location>
        <begin position="1"/>
        <end position="38"/>
    </location>
</feature>
<feature type="propeptide" id="PRO_0000006763">
    <location>
        <begin position="39"/>
        <end position="60"/>
    </location>
</feature>
<feature type="modified residue" description="3-hydroxytryptophan" evidence="4">
    <location>
        <position position="28"/>
    </location>
</feature>
<feature type="modified residue" description="Cysteine amide" evidence="4">
    <location>
        <position position="38"/>
    </location>
</feature>
<feature type="disulfide bond" evidence="3 8">
    <location>
        <begin position="4"/>
        <end position="25"/>
    </location>
</feature>
<feature type="disulfide bond" evidence="3 8">
    <location>
        <begin position="10"/>
        <end position="33"/>
    </location>
</feature>
<feature type="disulfide bond" evidence="3 8">
    <location>
        <begin position="14"/>
        <end position="35"/>
    </location>
</feature>
<feature type="disulfide bond" evidence="3 8">
    <location>
        <begin position="21"/>
        <end position="38"/>
    </location>
</feature>
<feature type="non-terminal residue">
    <location>
        <position position="1"/>
    </location>
</feature>
<feature type="helix" evidence="9">
    <location>
        <begin position="7"/>
        <end position="16"/>
    </location>
</feature>
<feature type="strand" evidence="9">
    <location>
        <begin position="22"/>
        <end position="25"/>
    </location>
</feature>
<feature type="strand" evidence="9">
    <location>
        <begin position="32"/>
        <end position="36"/>
    </location>
</feature>
<dbReference type="EMBL" id="AF162337">
    <property type="protein sequence ID" value="AAD45117.1"/>
    <property type="molecule type" value="mRNA"/>
</dbReference>
<dbReference type="PIR" id="S74088">
    <property type="entry name" value="S74088"/>
</dbReference>
<dbReference type="PDB" id="1FJN">
    <property type="method" value="NMR"/>
    <property type="chains" value="A=1-38"/>
</dbReference>
<dbReference type="PDBsum" id="1FJN"/>
<dbReference type="SMR" id="P80571"/>
<dbReference type="EvolutionaryTrace" id="P80571"/>
<dbReference type="GO" id="GO:0005576">
    <property type="term" value="C:extracellular region"/>
    <property type="evidence" value="ECO:0007669"/>
    <property type="project" value="UniProtKB-SubCell"/>
</dbReference>
<dbReference type="GO" id="GO:0042742">
    <property type="term" value="P:defense response to bacterium"/>
    <property type="evidence" value="ECO:0007669"/>
    <property type="project" value="UniProtKB-KW"/>
</dbReference>
<dbReference type="GO" id="GO:0045087">
    <property type="term" value="P:innate immune response"/>
    <property type="evidence" value="ECO:0007669"/>
    <property type="project" value="UniProtKB-KW"/>
</dbReference>
<dbReference type="Gene3D" id="3.30.30.10">
    <property type="entry name" value="Knottin, scorpion toxin-like"/>
    <property type="match status" value="1"/>
</dbReference>
<dbReference type="InterPro" id="IPR001542">
    <property type="entry name" value="Defensin_invertebrate/fungal"/>
</dbReference>
<dbReference type="InterPro" id="IPR036574">
    <property type="entry name" value="Scorpion_toxin-like_sf"/>
</dbReference>
<dbReference type="Pfam" id="PF01097">
    <property type="entry name" value="Defensin_2"/>
    <property type="match status" value="1"/>
</dbReference>
<dbReference type="SUPFAM" id="SSF57095">
    <property type="entry name" value="Scorpion toxin-like"/>
    <property type="match status" value="1"/>
</dbReference>
<dbReference type="PROSITE" id="PS51378">
    <property type="entry name" value="INVERT_DEFENSINS"/>
    <property type="match status" value="1"/>
</dbReference>
<accession>P80571</accession>
<accession>Q9Y0B0</accession>